<evidence type="ECO:0000255" key="1">
    <source>
        <dbReference type="HAMAP-Rule" id="MF_01161"/>
    </source>
</evidence>
<accession>Q607F5</accession>
<dbReference type="EC" id="6.3.4.19" evidence="1"/>
<dbReference type="EMBL" id="AE017282">
    <property type="protein sequence ID" value="AAU92166.1"/>
    <property type="molecule type" value="Genomic_DNA"/>
</dbReference>
<dbReference type="RefSeq" id="WP_010961058.1">
    <property type="nucleotide sequence ID" value="NC_002977.6"/>
</dbReference>
<dbReference type="SMR" id="Q607F5"/>
<dbReference type="STRING" id="243233.MCA1805"/>
<dbReference type="GeneID" id="88224053"/>
<dbReference type="KEGG" id="mca:MCA1805"/>
<dbReference type="eggNOG" id="COG0037">
    <property type="taxonomic scope" value="Bacteria"/>
</dbReference>
<dbReference type="HOGENOM" id="CLU_018869_2_0_6"/>
<dbReference type="Proteomes" id="UP000006821">
    <property type="component" value="Chromosome"/>
</dbReference>
<dbReference type="GO" id="GO:0005737">
    <property type="term" value="C:cytoplasm"/>
    <property type="evidence" value="ECO:0007669"/>
    <property type="project" value="UniProtKB-SubCell"/>
</dbReference>
<dbReference type="GO" id="GO:0005524">
    <property type="term" value="F:ATP binding"/>
    <property type="evidence" value="ECO:0007669"/>
    <property type="project" value="UniProtKB-UniRule"/>
</dbReference>
<dbReference type="GO" id="GO:0032267">
    <property type="term" value="F:tRNA(Ile)-lysidine synthase activity"/>
    <property type="evidence" value="ECO:0007669"/>
    <property type="project" value="UniProtKB-EC"/>
</dbReference>
<dbReference type="GO" id="GO:0006400">
    <property type="term" value="P:tRNA modification"/>
    <property type="evidence" value="ECO:0007669"/>
    <property type="project" value="UniProtKB-UniRule"/>
</dbReference>
<dbReference type="CDD" id="cd01992">
    <property type="entry name" value="TilS_N"/>
    <property type="match status" value="1"/>
</dbReference>
<dbReference type="Gene3D" id="1.20.59.20">
    <property type="match status" value="1"/>
</dbReference>
<dbReference type="Gene3D" id="3.40.50.620">
    <property type="entry name" value="HUPs"/>
    <property type="match status" value="1"/>
</dbReference>
<dbReference type="HAMAP" id="MF_01161">
    <property type="entry name" value="tRNA_Ile_lys_synt"/>
    <property type="match status" value="1"/>
</dbReference>
<dbReference type="InterPro" id="IPR012796">
    <property type="entry name" value="Lysidine-tRNA-synth_C"/>
</dbReference>
<dbReference type="InterPro" id="IPR014729">
    <property type="entry name" value="Rossmann-like_a/b/a_fold"/>
</dbReference>
<dbReference type="InterPro" id="IPR011063">
    <property type="entry name" value="TilS/TtcA_N"/>
</dbReference>
<dbReference type="InterPro" id="IPR012094">
    <property type="entry name" value="tRNA_Ile_lys_synt"/>
</dbReference>
<dbReference type="InterPro" id="IPR012795">
    <property type="entry name" value="tRNA_Ile_lys_synt_N"/>
</dbReference>
<dbReference type="InterPro" id="IPR015262">
    <property type="entry name" value="tRNA_Ile_lys_synt_subst-bd"/>
</dbReference>
<dbReference type="NCBIfam" id="TIGR02433">
    <property type="entry name" value="lysidine_TilS_C"/>
    <property type="match status" value="1"/>
</dbReference>
<dbReference type="NCBIfam" id="TIGR02432">
    <property type="entry name" value="lysidine_TilS_N"/>
    <property type="match status" value="1"/>
</dbReference>
<dbReference type="PANTHER" id="PTHR43033">
    <property type="entry name" value="TRNA(ILE)-LYSIDINE SYNTHASE-RELATED"/>
    <property type="match status" value="1"/>
</dbReference>
<dbReference type="PANTHER" id="PTHR43033:SF1">
    <property type="entry name" value="TRNA(ILE)-LYSIDINE SYNTHASE-RELATED"/>
    <property type="match status" value="1"/>
</dbReference>
<dbReference type="Pfam" id="PF01171">
    <property type="entry name" value="ATP_bind_3"/>
    <property type="match status" value="1"/>
</dbReference>
<dbReference type="Pfam" id="PF09179">
    <property type="entry name" value="TilS"/>
    <property type="match status" value="1"/>
</dbReference>
<dbReference type="Pfam" id="PF11734">
    <property type="entry name" value="TilS_C"/>
    <property type="match status" value="1"/>
</dbReference>
<dbReference type="SMART" id="SM00977">
    <property type="entry name" value="TilS_C"/>
    <property type="match status" value="1"/>
</dbReference>
<dbReference type="SUPFAM" id="SSF52402">
    <property type="entry name" value="Adenine nucleotide alpha hydrolases-like"/>
    <property type="match status" value="1"/>
</dbReference>
<dbReference type="SUPFAM" id="SSF82829">
    <property type="entry name" value="MesJ substrate recognition domain-like"/>
    <property type="match status" value="1"/>
</dbReference>
<dbReference type="SUPFAM" id="SSF56037">
    <property type="entry name" value="PheT/TilS domain"/>
    <property type="match status" value="1"/>
</dbReference>
<reference key="1">
    <citation type="journal article" date="2004" name="PLoS Biol.">
        <title>Genomic insights into methanotrophy: the complete genome sequence of Methylococcus capsulatus (Bath).</title>
        <authorList>
            <person name="Ward N.L."/>
            <person name="Larsen O."/>
            <person name="Sakwa J."/>
            <person name="Bruseth L."/>
            <person name="Khouri H.M."/>
            <person name="Durkin A.S."/>
            <person name="Dimitrov G."/>
            <person name="Jiang L."/>
            <person name="Scanlan D."/>
            <person name="Kang K.H."/>
            <person name="Lewis M.R."/>
            <person name="Nelson K.E."/>
            <person name="Methe B.A."/>
            <person name="Wu M."/>
            <person name="Heidelberg J.F."/>
            <person name="Paulsen I.T."/>
            <person name="Fouts D.E."/>
            <person name="Ravel J."/>
            <person name="Tettelin H."/>
            <person name="Ren Q."/>
            <person name="Read T.D."/>
            <person name="DeBoy R.T."/>
            <person name="Seshadri R."/>
            <person name="Salzberg S.L."/>
            <person name="Jensen H.B."/>
            <person name="Birkeland N.K."/>
            <person name="Nelson W.C."/>
            <person name="Dodson R.J."/>
            <person name="Grindhaug S.H."/>
            <person name="Holt I.E."/>
            <person name="Eidhammer I."/>
            <person name="Jonasen I."/>
            <person name="Vanaken S."/>
            <person name="Utterback T.R."/>
            <person name="Feldblyum T.V."/>
            <person name="Fraser C.M."/>
            <person name="Lillehaug J.R."/>
            <person name="Eisen J.A."/>
        </authorList>
    </citation>
    <scope>NUCLEOTIDE SEQUENCE [LARGE SCALE GENOMIC DNA]</scope>
    <source>
        <strain>ATCC 33009 / NCIMB 11132 / Bath</strain>
    </source>
</reference>
<proteinExistence type="inferred from homology"/>
<protein>
    <recommendedName>
        <fullName evidence="1">tRNA(Ile)-lysidine synthase</fullName>
        <ecNumber evidence="1">6.3.4.19</ecNumber>
    </recommendedName>
    <alternativeName>
        <fullName evidence="1">tRNA(Ile)-2-lysyl-cytidine synthase</fullName>
    </alternativeName>
    <alternativeName>
        <fullName evidence="1">tRNA(Ile)-lysidine synthetase</fullName>
    </alternativeName>
</protein>
<name>TILS_METCA</name>
<feature type="chain" id="PRO_0000181721" description="tRNA(Ile)-lysidine synthase">
    <location>
        <begin position="1"/>
        <end position="439"/>
    </location>
</feature>
<feature type="binding site" evidence="1">
    <location>
        <begin position="23"/>
        <end position="28"/>
    </location>
    <ligand>
        <name>ATP</name>
        <dbReference type="ChEBI" id="CHEBI:30616"/>
    </ligand>
</feature>
<sequence>MRLSLDSFRAGLHPGSTYRVAFSGGLDSAVLLDLMCQVRRVSGIGVRAIHVHHGIQPEADAWSRHCAAVADRYGVALDILQIDGRSRPGDSPEAAARTARYHSLEASLDPGDILVTAQHLDDQAETLLLQLLRGAGLAGLAAMPNAVPFGAGILHRPLLRFGRRDILAYAQERGLSWIEDPSNRDERYDRNFIRRRILPQLAGRWPAVAANLTRSAGHCAEAAGLLDRLADTLMAAATAADEPGTLVLEIVQRLQPDEQRLLLRRWIHKRGLRAPPAKLLERIRKEVVETAGDRTPMIAWAEGTVRRYRHRLHLLPPSADFDASWTAAWSGETPLTLAGNGCLHAALCPGPGIDPDKWRSGRITVRYRRAGDRLEPAGRRGHHELKKLFQEAGLPPWLRDRQPIVCIDGRIASVGGSQWLASEFAGAPERVNIVVHWTP</sequence>
<comment type="function">
    <text evidence="1">Ligates lysine onto the cytidine present at position 34 of the AUA codon-specific tRNA(Ile) that contains the anticodon CAU, in an ATP-dependent manner. Cytidine is converted to lysidine, thus changing the amino acid specificity of the tRNA from methionine to isoleucine.</text>
</comment>
<comment type="catalytic activity">
    <reaction evidence="1">
        <text>cytidine(34) in tRNA(Ile2) + L-lysine + ATP = lysidine(34) in tRNA(Ile2) + AMP + diphosphate + H(+)</text>
        <dbReference type="Rhea" id="RHEA:43744"/>
        <dbReference type="Rhea" id="RHEA-COMP:10625"/>
        <dbReference type="Rhea" id="RHEA-COMP:10670"/>
        <dbReference type="ChEBI" id="CHEBI:15378"/>
        <dbReference type="ChEBI" id="CHEBI:30616"/>
        <dbReference type="ChEBI" id="CHEBI:32551"/>
        <dbReference type="ChEBI" id="CHEBI:33019"/>
        <dbReference type="ChEBI" id="CHEBI:82748"/>
        <dbReference type="ChEBI" id="CHEBI:83665"/>
        <dbReference type="ChEBI" id="CHEBI:456215"/>
        <dbReference type="EC" id="6.3.4.19"/>
    </reaction>
</comment>
<comment type="subcellular location">
    <subcellularLocation>
        <location evidence="1">Cytoplasm</location>
    </subcellularLocation>
</comment>
<comment type="domain">
    <text>The N-terminal region contains the highly conserved SGGXDS motif, predicted to be a P-loop motif involved in ATP binding.</text>
</comment>
<comment type="similarity">
    <text evidence="1">Belongs to the tRNA(Ile)-lysidine synthase family.</text>
</comment>
<organism>
    <name type="scientific">Methylococcus capsulatus (strain ATCC 33009 / NCIMB 11132 / Bath)</name>
    <dbReference type="NCBI Taxonomy" id="243233"/>
    <lineage>
        <taxon>Bacteria</taxon>
        <taxon>Pseudomonadati</taxon>
        <taxon>Pseudomonadota</taxon>
        <taxon>Gammaproteobacteria</taxon>
        <taxon>Methylococcales</taxon>
        <taxon>Methylococcaceae</taxon>
        <taxon>Methylococcus</taxon>
    </lineage>
</organism>
<keyword id="KW-0067">ATP-binding</keyword>
<keyword id="KW-0963">Cytoplasm</keyword>
<keyword id="KW-0436">Ligase</keyword>
<keyword id="KW-0547">Nucleotide-binding</keyword>
<keyword id="KW-1185">Reference proteome</keyword>
<keyword id="KW-0819">tRNA processing</keyword>
<gene>
    <name evidence="1" type="primary">tilS</name>
    <name type="ordered locus">MCA1805</name>
</gene>